<reference key="1">
    <citation type="journal article" date="2009" name="Infect. Immun.">
        <title>Comparative genomics reveal extensive transposon-mediated genomic plasticity and diversity among potential effector proteins within the genus Coxiella.</title>
        <authorList>
            <person name="Beare P.A."/>
            <person name="Unsworth N."/>
            <person name="Andoh M."/>
            <person name="Voth D.E."/>
            <person name="Omsland A."/>
            <person name="Gilk S.D."/>
            <person name="Williams K.P."/>
            <person name="Sobral B.W."/>
            <person name="Kupko J.J. III"/>
            <person name="Porcella S.F."/>
            <person name="Samuel J.E."/>
            <person name="Heinzen R.A."/>
        </authorList>
    </citation>
    <scope>NUCLEOTIDE SEQUENCE [LARGE SCALE GENOMIC DNA]</scope>
    <source>
        <strain>Dugway 5J108-111</strain>
    </source>
</reference>
<feature type="chain" id="PRO_0000353341" description="DNA-directed RNA polymerase subunit beta'">
    <location>
        <begin position="1"/>
        <end position="1414"/>
    </location>
</feature>
<feature type="region of interest" description="Disordered" evidence="2">
    <location>
        <begin position="1392"/>
        <end position="1414"/>
    </location>
</feature>
<feature type="compositionally biased region" description="Low complexity" evidence="2">
    <location>
        <begin position="1392"/>
        <end position="1403"/>
    </location>
</feature>
<feature type="binding site" evidence="1">
    <location>
        <position position="70"/>
    </location>
    <ligand>
        <name>Zn(2+)</name>
        <dbReference type="ChEBI" id="CHEBI:29105"/>
        <label>1</label>
    </ligand>
</feature>
<feature type="binding site" evidence="1">
    <location>
        <position position="72"/>
    </location>
    <ligand>
        <name>Zn(2+)</name>
        <dbReference type="ChEBI" id="CHEBI:29105"/>
        <label>1</label>
    </ligand>
</feature>
<feature type="binding site" evidence="1">
    <location>
        <position position="85"/>
    </location>
    <ligand>
        <name>Zn(2+)</name>
        <dbReference type="ChEBI" id="CHEBI:29105"/>
        <label>1</label>
    </ligand>
</feature>
<feature type="binding site" evidence="1">
    <location>
        <position position="88"/>
    </location>
    <ligand>
        <name>Zn(2+)</name>
        <dbReference type="ChEBI" id="CHEBI:29105"/>
        <label>1</label>
    </ligand>
</feature>
<feature type="binding site" evidence="1">
    <location>
        <position position="460"/>
    </location>
    <ligand>
        <name>Mg(2+)</name>
        <dbReference type="ChEBI" id="CHEBI:18420"/>
    </ligand>
</feature>
<feature type="binding site" evidence="1">
    <location>
        <position position="462"/>
    </location>
    <ligand>
        <name>Mg(2+)</name>
        <dbReference type="ChEBI" id="CHEBI:18420"/>
    </ligand>
</feature>
<feature type="binding site" evidence="1">
    <location>
        <position position="464"/>
    </location>
    <ligand>
        <name>Mg(2+)</name>
        <dbReference type="ChEBI" id="CHEBI:18420"/>
    </ligand>
</feature>
<feature type="binding site" evidence="1">
    <location>
        <position position="814"/>
    </location>
    <ligand>
        <name>Zn(2+)</name>
        <dbReference type="ChEBI" id="CHEBI:29105"/>
        <label>2</label>
    </ligand>
</feature>
<feature type="binding site" evidence="1">
    <location>
        <position position="888"/>
    </location>
    <ligand>
        <name>Zn(2+)</name>
        <dbReference type="ChEBI" id="CHEBI:29105"/>
        <label>2</label>
    </ligand>
</feature>
<feature type="binding site" evidence="1">
    <location>
        <position position="895"/>
    </location>
    <ligand>
        <name>Zn(2+)</name>
        <dbReference type="ChEBI" id="CHEBI:29105"/>
        <label>2</label>
    </ligand>
</feature>
<feature type="binding site" evidence="1">
    <location>
        <position position="898"/>
    </location>
    <ligand>
        <name>Zn(2+)</name>
        <dbReference type="ChEBI" id="CHEBI:29105"/>
        <label>2</label>
    </ligand>
</feature>
<comment type="function">
    <text evidence="1">DNA-dependent RNA polymerase catalyzes the transcription of DNA into RNA using the four ribonucleoside triphosphates as substrates.</text>
</comment>
<comment type="catalytic activity">
    <reaction evidence="1">
        <text>RNA(n) + a ribonucleoside 5'-triphosphate = RNA(n+1) + diphosphate</text>
        <dbReference type="Rhea" id="RHEA:21248"/>
        <dbReference type="Rhea" id="RHEA-COMP:14527"/>
        <dbReference type="Rhea" id="RHEA-COMP:17342"/>
        <dbReference type="ChEBI" id="CHEBI:33019"/>
        <dbReference type="ChEBI" id="CHEBI:61557"/>
        <dbReference type="ChEBI" id="CHEBI:140395"/>
        <dbReference type="EC" id="2.7.7.6"/>
    </reaction>
</comment>
<comment type="cofactor">
    <cofactor evidence="1">
        <name>Mg(2+)</name>
        <dbReference type="ChEBI" id="CHEBI:18420"/>
    </cofactor>
    <text evidence="1">Binds 1 Mg(2+) ion per subunit.</text>
</comment>
<comment type="cofactor">
    <cofactor evidence="1">
        <name>Zn(2+)</name>
        <dbReference type="ChEBI" id="CHEBI:29105"/>
    </cofactor>
    <text evidence="1">Binds 2 Zn(2+) ions per subunit.</text>
</comment>
<comment type="subunit">
    <text evidence="1">The RNAP catalytic core consists of 2 alpha, 1 beta, 1 beta' and 1 omega subunit. When a sigma factor is associated with the core the holoenzyme is formed, which can initiate transcription.</text>
</comment>
<comment type="similarity">
    <text evidence="1">Belongs to the RNA polymerase beta' chain family.</text>
</comment>
<proteinExistence type="inferred from homology"/>
<protein>
    <recommendedName>
        <fullName evidence="1">DNA-directed RNA polymerase subunit beta'</fullName>
        <shortName evidence="1">RNAP subunit beta'</shortName>
        <ecNumber evidence="1">2.7.7.6</ecNumber>
    </recommendedName>
    <alternativeName>
        <fullName evidence="1">RNA polymerase subunit beta'</fullName>
    </alternativeName>
    <alternativeName>
        <fullName evidence="1">Transcriptase subunit beta'</fullName>
    </alternativeName>
</protein>
<organism>
    <name type="scientific">Coxiella burnetii (strain Dugway 5J108-111)</name>
    <dbReference type="NCBI Taxonomy" id="434922"/>
    <lineage>
        <taxon>Bacteria</taxon>
        <taxon>Pseudomonadati</taxon>
        <taxon>Pseudomonadota</taxon>
        <taxon>Gammaproteobacteria</taxon>
        <taxon>Legionellales</taxon>
        <taxon>Coxiellaceae</taxon>
        <taxon>Coxiella</taxon>
    </lineage>
</organism>
<name>RPOC_COXBN</name>
<dbReference type="EC" id="2.7.7.6" evidence="1"/>
<dbReference type="EMBL" id="CP000733">
    <property type="protein sequence ID" value="ABS77749.1"/>
    <property type="molecule type" value="Genomic_DNA"/>
</dbReference>
<dbReference type="RefSeq" id="WP_011997293.1">
    <property type="nucleotide sequence ID" value="NC_009727.1"/>
</dbReference>
<dbReference type="SMR" id="A9KD37"/>
<dbReference type="KEGG" id="cbd:CBUD_1860"/>
<dbReference type="HOGENOM" id="CLU_000524_3_1_6"/>
<dbReference type="Proteomes" id="UP000008555">
    <property type="component" value="Chromosome"/>
</dbReference>
<dbReference type="GO" id="GO:0000428">
    <property type="term" value="C:DNA-directed RNA polymerase complex"/>
    <property type="evidence" value="ECO:0007669"/>
    <property type="project" value="UniProtKB-KW"/>
</dbReference>
<dbReference type="GO" id="GO:0003677">
    <property type="term" value="F:DNA binding"/>
    <property type="evidence" value="ECO:0007669"/>
    <property type="project" value="UniProtKB-UniRule"/>
</dbReference>
<dbReference type="GO" id="GO:0003899">
    <property type="term" value="F:DNA-directed RNA polymerase activity"/>
    <property type="evidence" value="ECO:0007669"/>
    <property type="project" value="UniProtKB-UniRule"/>
</dbReference>
<dbReference type="GO" id="GO:0000287">
    <property type="term" value="F:magnesium ion binding"/>
    <property type="evidence" value="ECO:0007669"/>
    <property type="project" value="UniProtKB-UniRule"/>
</dbReference>
<dbReference type="GO" id="GO:0008270">
    <property type="term" value="F:zinc ion binding"/>
    <property type="evidence" value="ECO:0007669"/>
    <property type="project" value="UniProtKB-UniRule"/>
</dbReference>
<dbReference type="GO" id="GO:0006351">
    <property type="term" value="P:DNA-templated transcription"/>
    <property type="evidence" value="ECO:0007669"/>
    <property type="project" value="UniProtKB-UniRule"/>
</dbReference>
<dbReference type="CDD" id="cd02655">
    <property type="entry name" value="RNAP_beta'_C"/>
    <property type="match status" value="1"/>
</dbReference>
<dbReference type="CDD" id="cd01609">
    <property type="entry name" value="RNAP_beta'_N"/>
    <property type="match status" value="1"/>
</dbReference>
<dbReference type="FunFam" id="1.10.132.30:FF:000003">
    <property type="entry name" value="DNA-directed RNA polymerase subunit beta"/>
    <property type="match status" value="1"/>
</dbReference>
<dbReference type="FunFam" id="1.10.150.390:FF:000002">
    <property type="entry name" value="DNA-directed RNA polymerase subunit beta"/>
    <property type="match status" value="1"/>
</dbReference>
<dbReference type="FunFam" id="4.10.860.120:FF:000001">
    <property type="entry name" value="DNA-directed RNA polymerase subunit beta"/>
    <property type="match status" value="1"/>
</dbReference>
<dbReference type="Gene3D" id="1.10.132.30">
    <property type="match status" value="1"/>
</dbReference>
<dbReference type="Gene3D" id="1.10.150.390">
    <property type="match status" value="1"/>
</dbReference>
<dbReference type="Gene3D" id="1.10.1790.20">
    <property type="match status" value="1"/>
</dbReference>
<dbReference type="Gene3D" id="1.10.40.90">
    <property type="match status" value="1"/>
</dbReference>
<dbReference type="Gene3D" id="2.40.40.20">
    <property type="match status" value="1"/>
</dbReference>
<dbReference type="Gene3D" id="2.40.50.100">
    <property type="match status" value="3"/>
</dbReference>
<dbReference type="Gene3D" id="4.10.860.120">
    <property type="entry name" value="RNA polymerase II, clamp domain"/>
    <property type="match status" value="1"/>
</dbReference>
<dbReference type="Gene3D" id="1.10.274.100">
    <property type="entry name" value="RNA polymerase Rpb1, domain 3"/>
    <property type="match status" value="1"/>
</dbReference>
<dbReference type="HAMAP" id="MF_01322">
    <property type="entry name" value="RNApol_bact_RpoC"/>
    <property type="match status" value="1"/>
</dbReference>
<dbReference type="InterPro" id="IPR045867">
    <property type="entry name" value="DNA-dir_RpoC_beta_prime"/>
</dbReference>
<dbReference type="InterPro" id="IPR012754">
    <property type="entry name" value="DNA-dir_RpoC_beta_prime_bact"/>
</dbReference>
<dbReference type="InterPro" id="IPR000722">
    <property type="entry name" value="RNA_pol_asu"/>
</dbReference>
<dbReference type="InterPro" id="IPR006592">
    <property type="entry name" value="RNA_pol_N"/>
</dbReference>
<dbReference type="InterPro" id="IPR007080">
    <property type="entry name" value="RNA_pol_Rpb1_1"/>
</dbReference>
<dbReference type="InterPro" id="IPR007066">
    <property type="entry name" value="RNA_pol_Rpb1_3"/>
</dbReference>
<dbReference type="InterPro" id="IPR042102">
    <property type="entry name" value="RNA_pol_Rpb1_3_sf"/>
</dbReference>
<dbReference type="InterPro" id="IPR007083">
    <property type="entry name" value="RNA_pol_Rpb1_4"/>
</dbReference>
<dbReference type="InterPro" id="IPR007081">
    <property type="entry name" value="RNA_pol_Rpb1_5"/>
</dbReference>
<dbReference type="InterPro" id="IPR044893">
    <property type="entry name" value="RNA_pol_Rpb1_clamp_domain"/>
</dbReference>
<dbReference type="InterPro" id="IPR038120">
    <property type="entry name" value="Rpb1_funnel_sf"/>
</dbReference>
<dbReference type="NCBIfam" id="TIGR02386">
    <property type="entry name" value="rpoC_TIGR"/>
    <property type="match status" value="1"/>
</dbReference>
<dbReference type="PANTHER" id="PTHR19376">
    <property type="entry name" value="DNA-DIRECTED RNA POLYMERASE"/>
    <property type="match status" value="1"/>
</dbReference>
<dbReference type="PANTHER" id="PTHR19376:SF54">
    <property type="entry name" value="DNA-DIRECTED RNA POLYMERASE SUBUNIT BETA"/>
    <property type="match status" value="1"/>
</dbReference>
<dbReference type="Pfam" id="PF04997">
    <property type="entry name" value="RNA_pol_Rpb1_1"/>
    <property type="match status" value="1"/>
</dbReference>
<dbReference type="Pfam" id="PF00623">
    <property type="entry name" value="RNA_pol_Rpb1_2"/>
    <property type="match status" value="1"/>
</dbReference>
<dbReference type="Pfam" id="PF04983">
    <property type="entry name" value="RNA_pol_Rpb1_3"/>
    <property type="match status" value="1"/>
</dbReference>
<dbReference type="Pfam" id="PF05000">
    <property type="entry name" value="RNA_pol_Rpb1_4"/>
    <property type="match status" value="1"/>
</dbReference>
<dbReference type="Pfam" id="PF04998">
    <property type="entry name" value="RNA_pol_Rpb1_5"/>
    <property type="match status" value="1"/>
</dbReference>
<dbReference type="SMART" id="SM00663">
    <property type="entry name" value="RPOLA_N"/>
    <property type="match status" value="1"/>
</dbReference>
<dbReference type="SUPFAM" id="SSF64484">
    <property type="entry name" value="beta and beta-prime subunits of DNA dependent RNA-polymerase"/>
    <property type="match status" value="1"/>
</dbReference>
<keyword id="KW-0240">DNA-directed RNA polymerase</keyword>
<keyword id="KW-0460">Magnesium</keyword>
<keyword id="KW-0479">Metal-binding</keyword>
<keyword id="KW-0548">Nucleotidyltransferase</keyword>
<keyword id="KW-0804">Transcription</keyword>
<keyword id="KW-0808">Transferase</keyword>
<keyword id="KW-0862">Zinc</keyword>
<sequence>MRDLVKQLKSEKHTAEFDALRIKLASPEEVRSWSYGEVKKPETINYRTFKPEREGLFCAKIFGPIKDYECLCGKYKRLKHRGVICEKCGVEVTLAKVRRERMGHIELASPVAHIWYLKSLPSRIGLLLDVTLRDIERILYFEAYVVVDPGMTDLEPRQLLSEEAYLDALEEYGDDFTALMGAEAIQRLLRDIDVEAEVEALRTELQTTTSETKTKKLTKRLKVLSAFLESGNKPEWMILTVLPVLPPDLRPLVPLDGGRFATSDLNDLYRRVINRNNRLKRLLDLNAPDIIVRNEKRMLQEAVDALLDNGRRGRAILGSNRRQLKSLADMIKGKSGRFRQNLLGKRVDYSGRSVIVVGPTLKLHQAGLPKKMALELFKPFIFSKLQLRGLATTVKAAKKLVENEGPEVWDILEEVIREHPILLNRAPTLHRLGIQAFEPVLVEGKAIQLHPLVCTAYNADFDGDQMAVHVPLTLEAQLEARSLMMSTNNVLHPANGEPIIVPSQDVVLGLYYITRDRVNAKGEGMRFADAQEVVRAYENDQVDLHARITVRIKEGILNEAGEIEESDRLVNTAAGRILLWQIVPKGLPFALVDQPMTKKAVTKLLDFCYRNLGLKTTVIFADKLMYMGFHYATHSGVSIGINDLVVPDQKEAIISRAEDEVREIEKQYASGLVTHGERRNKVIDIWSRTNDQVAKAMMEKIAVEKVKDAEGKEVAQSSFNSIYMMSDSGARGSAAQTRQLAGMRGLMARPDGTIIETPITANFREGLNVLQYFISTHGARKGLADTALKTANSGYLTRRLVDVAQDLVVTEHDCGTEASIEMMPHIEGGDVVEPLRERVLGRILAEPVMDPKSRKELLAKDTFLDERRVDILEEHSIDRVRVRSAITCEARYGICSMCYGRDLARGHVVNVGEAIGVVAAQSIGEPGTQLTMRTFHIGGAASRATAANNIEVKSTGKIKLRNLKTVEQAQGNLVAVSRSGELVVQDLQGSEREHYKVPYGATISVRDGDSVKAGQIVAQWDPHTHPIITEVAGTLRFVDLVDGVTMNRQTDELTGLSSIVITSTKQRSASGKELRPMVKLVDKNDDDLFLPGGKVPAHYFLPEGTFLTKEDGTTVNIGDVLARIPQETSKTRDITGGLPRVADLFEARRPKDAAILAEISGVVSFGKDTKDKGRLIITAPDGTTHEELIPKWRHVSVFEGETVEKGEVIADGPRDPHDILRLLGVNALANYIVNEVQEVYRLQGVKINDKHIEVIVRQMLRKVKITQPGDTDLLQNEQVERTRVREENEKIIKKDGTVAKVEPILLGITKASLATESFISAASFQETTRVLTAASVAGKRDDLRGLKENVIVGRLIPAGTGFSYHQQRRAVAGKSVEEKEIEEKRVTASEAEQALSEALKSSAPQEAKAAQKDE</sequence>
<gene>
    <name evidence="1" type="primary">rpoC</name>
    <name type="ordered locus">CBUD_1860</name>
</gene>
<evidence type="ECO:0000255" key="1">
    <source>
        <dbReference type="HAMAP-Rule" id="MF_01322"/>
    </source>
</evidence>
<evidence type="ECO:0000256" key="2">
    <source>
        <dbReference type="SAM" id="MobiDB-lite"/>
    </source>
</evidence>
<accession>A9KD37</accession>